<organism>
    <name type="scientific">Pediococcus pentosaceus (strain ATCC 25745 / CCUG 21536 / LMG 10740 / 183-1w)</name>
    <dbReference type="NCBI Taxonomy" id="278197"/>
    <lineage>
        <taxon>Bacteria</taxon>
        <taxon>Bacillati</taxon>
        <taxon>Bacillota</taxon>
        <taxon>Bacilli</taxon>
        <taxon>Lactobacillales</taxon>
        <taxon>Lactobacillaceae</taxon>
        <taxon>Pediococcus</taxon>
    </lineage>
</organism>
<feature type="chain" id="PRO_0000292739" description="UPF0342 protein PEPE_0673">
    <location>
        <begin position="1"/>
        <end position="114"/>
    </location>
</feature>
<gene>
    <name type="ordered locus">PEPE_0673</name>
</gene>
<reference key="1">
    <citation type="journal article" date="2006" name="Proc. Natl. Acad. Sci. U.S.A.">
        <title>Comparative genomics of the lactic acid bacteria.</title>
        <authorList>
            <person name="Makarova K.S."/>
            <person name="Slesarev A."/>
            <person name="Wolf Y.I."/>
            <person name="Sorokin A."/>
            <person name="Mirkin B."/>
            <person name="Koonin E.V."/>
            <person name="Pavlov A."/>
            <person name="Pavlova N."/>
            <person name="Karamychev V."/>
            <person name="Polouchine N."/>
            <person name="Shakhova V."/>
            <person name="Grigoriev I."/>
            <person name="Lou Y."/>
            <person name="Rohksar D."/>
            <person name="Lucas S."/>
            <person name="Huang K."/>
            <person name="Goodstein D.M."/>
            <person name="Hawkins T."/>
            <person name="Plengvidhya V."/>
            <person name="Welker D."/>
            <person name="Hughes J."/>
            <person name="Goh Y."/>
            <person name="Benson A."/>
            <person name="Baldwin K."/>
            <person name="Lee J.-H."/>
            <person name="Diaz-Muniz I."/>
            <person name="Dosti B."/>
            <person name="Smeianov V."/>
            <person name="Wechter W."/>
            <person name="Barabote R."/>
            <person name="Lorca G."/>
            <person name="Altermann E."/>
            <person name="Barrangou R."/>
            <person name="Ganesan B."/>
            <person name="Xie Y."/>
            <person name="Rawsthorne H."/>
            <person name="Tamir D."/>
            <person name="Parker C."/>
            <person name="Breidt F."/>
            <person name="Broadbent J.R."/>
            <person name="Hutkins R."/>
            <person name="O'Sullivan D."/>
            <person name="Steele J."/>
            <person name="Unlu G."/>
            <person name="Saier M.H. Jr."/>
            <person name="Klaenhammer T."/>
            <person name="Richardson P."/>
            <person name="Kozyavkin S."/>
            <person name="Weimer B.C."/>
            <person name="Mills D.A."/>
        </authorList>
    </citation>
    <scope>NUCLEOTIDE SEQUENCE [LARGE SCALE GENOMIC DNA]</scope>
    <source>
        <strain>ATCC 25745 / CCUG 21536 / LMG 10740 / 183-1w</strain>
    </source>
</reference>
<name>Y673_PEDPA</name>
<accession>Q03GD8</accession>
<protein>
    <recommendedName>
        <fullName evidence="1">UPF0342 protein PEPE_0673</fullName>
    </recommendedName>
</protein>
<proteinExistence type="inferred from homology"/>
<sequence>MAVNIYDTANQMEQEIRQTSEYKSLQEAFAEVRKDEHASALYSKFQDVQSNLQQKQMNGEELTEEEIKNVHEIADQIEKVDLIKDLMDKERNMNQLFSDVSQIIVKPIQELYKN</sequence>
<evidence type="ECO:0000255" key="1">
    <source>
        <dbReference type="HAMAP-Rule" id="MF_01526"/>
    </source>
</evidence>
<dbReference type="EMBL" id="CP000422">
    <property type="protein sequence ID" value="ABJ67734.1"/>
    <property type="molecule type" value="Genomic_DNA"/>
</dbReference>
<dbReference type="RefSeq" id="WP_002833772.1">
    <property type="nucleotide sequence ID" value="NC_008525.1"/>
</dbReference>
<dbReference type="SMR" id="Q03GD8"/>
<dbReference type="STRING" id="278197.PEPE_0673"/>
<dbReference type="GeneID" id="33062938"/>
<dbReference type="KEGG" id="ppe:PEPE_0673"/>
<dbReference type="eggNOG" id="COG3679">
    <property type="taxonomic scope" value="Bacteria"/>
</dbReference>
<dbReference type="HOGENOM" id="CLU_140243_3_1_9"/>
<dbReference type="OrthoDB" id="9811402at2"/>
<dbReference type="Proteomes" id="UP000000773">
    <property type="component" value="Chromosome"/>
</dbReference>
<dbReference type="Gene3D" id="1.20.1500.10">
    <property type="entry name" value="YheA/YmcA-like"/>
    <property type="match status" value="1"/>
</dbReference>
<dbReference type="HAMAP" id="MF_01526">
    <property type="entry name" value="UPF0342"/>
    <property type="match status" value="1"/>
</dbReference>
<dbReference type="InterPro" id="IPR010368">
    <property type="entry name" value="Com_YlbF"/>
</dbReference>
<dbReference type="InterPro" id="IPR023378">
    <property type="entry name" value="YheA/YmcA-like_dom_sf"/>
</dbReference>
<dbReference type="Pfam" id="PF06133">
    <property type="entry name" value="Com_YlbF"/>
    <property type="match status" value="1"/>
</dbReference>
<dbReference type="SUPFAM" id="SSF158622">
    <property type="entry name" value="YheA/YmcA-like"/>
    <property type="match status" value="1"/>
</dbReference>
<comment type="similarity">
    <text evidence="1">Belongs to the UPF0342 family.</text>
</comment>